<comment type="catalytic activity">
    <reaction>
        <text>Hydrolysis of terminal, non-reducing (1-&gt;4)-linked alpha-D-glucose residues with release of alpha-D-glucose.</text>
        <dbReference type="EC" id="3.2.1.20"/>
    </reaction>
</comment>
<comment type="developmental stage">
    <text evidence="3">One of the proteins expressed by the 44D cuticle gene cluster. Expressed in first, second and early 3rd instar larvae and in adults, but not in embryos or pupae.</text>
</comment>
<comment type="similarity">
    <text evidence="4">Belongs to the glycosyl hydrolase 13 family.</text>
</comment>
<comment type="sequence caution" evidence="4">
    <conflict type="erroneous gene model prediction">
        <sequence resource="EMBL-CDS" id="CAA23492"/>
    </conflict>
</comment>
<reference key="1">
    <citation type="journal article" date="1983" name="J. Mol. Biol.">
        <title>Two gene families clustered in a small region of the Drosophila genome.</title>
        <authorList>
            <person name="Snyder M."/>
            <person name="Davidson N."/>
        </authorList>
    </citation>
    <scope>NUCLEOTIDE SEQUENCE [GENOMIC DNA]</scope>
    <scope>DEVELOPMENTAL STAGE</scope>
</reference>
<reference key="2">
    <citation type="journal article" date="2000" name="Science">
        <title>The genome sequence of Drosophila melanogaster.</title>
        <authorList>
            <person name="Adams M.D."/>
            <person name="Celniker S.E."/>
            <person name="Holt R.A."/>
            <person name="Evans C.A."/>
            <person name="Gocayne J.D."/>
            <person name="Amanatides P.G."/>
            <person name="Scherer S.E."/>
            <person name="Li P.W."/>
            <person name="Hoskins R.A."/>
            <person name="Galle R.F."/>
            <person name="George R.A."/>
            <person name="Lewis S.E."/>
            <person name="Richards S."/>
            <person name="Ashburner M."/>
            <person name="Henderson S.N."/>
            <person name="Sutton G.G."/>
            <person name="Wortman J.R."/>
            <person name="Yandell M.D."/>
            <person name="Zhang Q."/>
            <person name="Chen L.X."/>
            <person name="Brandon R.C."/>
            <person name="Rogers Y.-H.C."/>
            <person name="Blazej R.G."/>
            <person name="Champe M."/>
            <person name="Pfeiffer B.D."/>
            <person name="Wan K.H."/>
            <person name="Doyle C."/>
            <person name="Baxter E.G."/>
            <person name="Helt G."/>
            <person name="Nelson C.R."/>
            <person name="Miklos G.L.G."/>
            <person name="Abril J.F."/>
            <person name="Agbayani A."/>
            <person name="An H.-J."/>
            <person name="Andrews-Pfannkoch C."/>
            <person name="Baldwin D."/>
            <person name="Ballew R.M."/>
            <person name="Basu A."/>
            <person name="Baxendale J."/>
            <person name="Bayraktaroglu L."/>
            <person name="Beasley E.M."/>
            <person name="Beeson K.Y."/>
            <person name="Benos P.V."/>
            <person name="Berman B.P."/>
            <person name="Bhandari D."/>
            <person name="Bolshakov S."/>
            <person name="Borkova D."/>
            <person name="Botchan M.R."/>
            <person name="Bouck J."/>
            <person name="Brokstein P."/>
            <person name="Brottier P."/>
            <person name="Burtis K.C."/>
            <person name="Busam D.A."/>
            <person name="Butler H."/>
            <person name="Cadieu E."/>
            <person name="Center A."/>
            <person name="Chandra I."/>
            <person name="Cherry J.M."/>
            <person name="Cawley S."/>
            <person name="Dahlke C."/>
            <person name="Davenport L.B."/>
            <person name="Davies P."/>
            <person name="de Pablos B."/>
            <person name="Delcher A."/>
            <person name="Deng Z."/>
            <person name="Mays A.D."/>
            <person name="Dew I."/>
            <person name="Dietz S.M."/>
            <person name="Dodson K."/>
            <person name="Doup L.E."/>
            <person name="Downes M."/>
            <person name="Dugan-Rocha S."/>
            <person name="Dunkov B.C."/>
            <person name="Dunn P."/>
            <person name="Durbin K.J."/>
            <person name="Evangelista C.C."/>
            <person name="Ferraz C."/>
            <person name="Ferriera S."/>
            <person name="Fleischmann W."/>
            <person name="Fosler C."/>
            <person name="Gabrielian A.E."/>
            <person name="Garg N.S."/>
            <person name="Gelbart W.M."/>
            <person name="Glasser K."/>
            <person name="Glodek A."/>
            <person name="Gong F."/>
            <person name="Gorrell J.H."/>
            <person name="Gu Z."/>
            <person name="Guan P."/>
            <person name="Harris M."/>
            <person name="Harris N.L."/>
            <person name="Harvey D.A."/>
            <person name="Heiman T.J."/>
            <person name="Hernandez J.R."/>
            <person name="Houck J."/>
            <person name="Hostin D."/>
            <person name="Houston K.A."/>
            <person name="Howland T.J."/>
            <person name="Wei M.-H."/>
            <person name="Ibegwam C."/>
            <person name="Jalali M."/>
            <person name="Kalush F."/>
            <person name="Karpen G.H."/>
            <person name="Ke Z."/>
            <person name="Kennison J.A."/>
            <person name="Ketchum K.A."/>
            <person name="Kimmel B.E."/>
            <person name="Kodira C.D."/>
            <person name="Kraft C.L."/>
            <person name="Kravitz S."/>
            <person name="Kulp D."/>
            <person name="Lai Z."/>
            <person name="Lasko P."/>
            <person name="Lei Y."/>
            <person name="Levitsky A.A."/>
            <person name="Li J.H."/>
            <person name="Li Z."/>
            <person name="Liang Y."/>
            <person name="Lin X."/>
            <person name="Liu X."/>
            <person name="Mattei B."/>
            <person name="McIntosh T.C."/>
            <person name="McLeod M.P."/>
            <person name="McPherson D."/>
            <person name="Merkulov G."/>
            <person name="Milshina N.V."/>
            <person name="Mobarry C."/>
            <person name="Morris J."/>
            <person name="Moshrefi A."/>
            <person name="Mount S.M."/>
            <person name="Moy M."/>
            <person name="Murphy B."/>
            <person name="Murphy L."/>
            <person name="Muzny D.M."/>
            <person name="Nelson D.L."/>
            <person name="Nelson D.R."/>
            <person name="Nelson K.A."/>
            <person name="Nixon K."/>
            <person name="Nusskern D.R."/>
            <person name="Pacleb J.M."/>
            <person name="Palazzolo M."/>
            <person name="Pittman G.S."/>
            <person name="Pan S."/>
            <person name="Pollard J."/>
            <person name="Puri V."/>
            <person name="Reese M.G."/>
            <person name="Reinert K."/>
            <person name="Remington K."/>
            <person name="Saunders R.D.C."/>
            <person name="Scheeler F."/>
            <person name="Shen H."/>
            <person name="Shue B.C."/>
            <person name="Siden-Kiamos I."/>
            <person name="Simpson M."/>
            <person name="Skupski M.P."/>
            <person name="Smith T.J."/>
            <person name="Spier E."/>
            <person name="Spradling A.C."/>
            <person name="Stapleton M."/>
            <person name="Strong R."/>
            <person name="Sun E."/>
            <person name="Svirskas R."/>
            <person name="Tector C."/>
            <person name="Turner R."/>
            <person name="Venter E."/>
            <person name="Wang A.H."/>
            <person name="Wang X."/>
            <person name="Wang Z.-Y."/>
            <person name="Wassarman D.A."/>
            <person name="Weinstock G.M."/>
            <person name="Weissenbach J."/>
            <person name="Williams S.M."/>
            <person name="Woodage T."/>
            <person name="Worley K.C."/>
            <person name="Wu D."/>
            <person name="Yang S."/>
            <person name="Yao Q.A."/>
            <person name="Ye J."/>
            <person name="Yeh R.-F."/>
            <person name="Zaveri J.S."/>
            <person name="Zhan M."/>
            <person name="Zhang G."/>
            <person name="Zhao Q."/>
            <person name="Zheng L."/>
            <person name="Zheng X.H."/>
            <person name="Zhong F.N."/>
            <person name="Zhong W."/>
            <person name="Zhou X."/>
            <person name="Zhu S.C."/>
            <person name="Zhu X."/>
            <person name="Smith H.O."/>
            <person name="Gibbs R.A."/>
            <person name="Myers E.W."/>
            <person name="Rubin G.M."/>
            <person name="Venter J.C."/>
        </authorList>
    </citation>
    <scope>NUCLEOTIDE SEQUENCE [LARGE SCALE GENOMIC DNA]</scope>
    <source>
        <strain>Berkeley</strain>
    </source>
</reference>
<reference key="3">
    <citation type="journal article" date="2002" name="Genome Biol.">
        <title>Annotation of the Drosophila melanogaster euchromatic genome: a systematic review.</title>
        <authorList>
            <person name="Misra S."/>
            <person name="Crosby M.A."/>
            <person name="Mungall C.J."/>
            <person name="Matthews B.B."/>
            <person name="Campbell K.S."/>
            <person name="Hradecky P."/>
            <person name="Huang Y."/>
            <person name="Kaminker J.S."/>
            <person name="Millburn G.H."/>
            <person name="Prochnik S.E."/>
            <person name="Smith C.D."/>
            <person name="Tupy J.L."/>
            <person name="Whitfield E.J."/>
            <person name="Bayraktaroglu L."/>
            <person name="Berman B.P."/>
            <person name="Bettencourt B.R."/>
            <person name="Celniker S.E."/>
            <person name="de Grey A.D.N.J."/>
            <person name="Drysdale R.A."/>
            <person name="Harris N.L."/>
            <person name="Richter J."/>
            <person name="Russo S."/>
            <person name="Schroeder A.J."/>
            <person name="Shu S.Q."/>
            <person name="Stapleton M."/>
            <person name="Yamada C."/>
            <person name="Ashburner M."/>
            <person name="Gelbart W.M."/>
            <person name="Rubin G.M."/>
            <person name="Lewis S.E."/>
        </authorList>
    </citation>
    <scope>GENOME REANNOTATION</scope>
    <source>
        <strain>Berkeley</strain>
    </source>
</reference>
<reference key="4">
    <citation type="journal article" date="2002" name="Genome Biol.">
        <title>A Drosophila full-length cDNA resource.</title>
        <authorList>
            <person name="Stapleton M."/>
            <person name="Carlson J.W."/>
            <person name="Brokstein P."/>
            <person name="Yu C."/>
            <person name="Champe M."/>
            <person name="George R.A."/>
            <person name="Guarin H."/>
            <person name="Kronmiller B."/>
            <person name="Pacleb J.M."/>
            <person name="Park S."/>
            <person name="Wan K.H."/>
            <person name="Rubin G.M."/>
            <person name="Celniker S.E."/>
        </authorList>
    </citation>
    <scope>NUCLEOTIDE SEQUENCE [LARGE SCALE MRNA]</scope>
    <source>
        <strain>Berkeley</strain>
        <tissue>Embryo</tissue>
    </source>
</reference>
<feature type="signal peptide" evidence="2">
    <location>
        <begin position="1"/>
        <end position="23"/>
    </location>
</feature>
<feature type="chain" id="PRO_0000001446" description="Maltase A2">
    <location>
        <begin position="24"/>
        <end position="567"/>
    </location>
</feature>
<feature type="active site" description="Nucleophile" evidence="1">
    <location>
        <position position="226"/>
    </location>
</feature>
<feature type="active site" description="Proton donor" evidence="1">
    <location>
        <position position="298"/>
    </location>
</feature>
<feature type="site" description="Transition state stabilizer" evidence="1">
    <location>
        <position position="364"/>
    </location>
</feature>
<feature type="glycosylation site" description="N-linked (GlcNAc...) asparagine" evidence="2">
    <location>
        <position position="30"/>
    </location>
</feature>
<feature type="glycosylation site" description="N-linked (GlcNAc...) asparagine" evidence="2">
    <location>
        <position position="124"/>
    </location>
</feature>
<feature type="glycosylation site" description="N-linked (GlcNAc...) asparagine" evidence="2">
    <location>
        <position position="198"/>
    </location>
</feature>
<feature type="glycosylation site" description="N-linked (GlcNAc...) asparagine" evidence="2">
    <location>
        <position position="312"/>
    </location>
</feature>
<feature type="sequence conflict" description="In Ref. 1; CAA23492." evidence="4" ref="1">
    <original>P</original>
    <variation>T</variation>
    <location>
        <position position="527"/>
    </location>
</feature>
<accession>P07191</accession>
<accession>Q9V4T7</accession>
<organism>
    <name type="scientific">Drosophila melanogaster</name>
    <name type="common">Fruit fly</name>
    <dbReference type="NCBI Taxonomy" id="7227"/>
    <lineage>
        <taxon>Eukaryota</taxon>
        <taxon>Metazoa</taxon>
        <taxon>Ecdysozoa</taxon>
        <taxon>Arthropoda</taxon>
        <taxon>Hexapoda</taxon>
        <taxon>Insecta</taxon>
        <taxon>Pterygota</taxon>
        <taxon>Neoptera</taxon>
        <taxon>Endopterygota</taxon>
        <taxon>Diptera</taxon>
        <taxon>Brachycera</taxon>
        <taxon>Muscomorpha</taxon>
        <taxon>Ephydroidea</taxon>
        <taxon>Drosophilidae</taxon>
        <taxon>Drosophila</taxon>
        <taxon>Sophophora</taxon>
    </lineage>
</organism>
<proteinExistence type="evidence at transcript level"/>
<protein>
    <recommendedName>
        <fullName>Maltase A2</fullName>
        <ecNumber>3.2.1.20</ecNumber>
    </recommendedName>
    <alternativeName>
        <fullName>Larval visceral protein D</fullName>
    </alternativeName>
</protein>
<gene>
    <name type="primary">Mal-A2</name>
    <name type="synonym">LvpD</name>
    <name type="ORF">CG8694</name>
</gene>
<name>MAL2_DROME</name>
<keyword id="KW-0325">Glycoprotein</keyword>
<keyword id="KW-0326">Glycosidase</keyword>
<keyword id="KW-0378">Hydrolase</keyword>
<keyword id="KW-1185">Reference proteome</keyword>
<keyword id="KW-0732">Signal</keyword>
<sequence length="567" mass="64542">MPKWAHLGLAALLLISTTQEGTADIDWWENASLYQIYPRSFQDSDGDGIGDLKGITSRLGYLKEIGITATWLSPIFTSPMSDFGYDISNFYDIDPIFGTLEDFDDLIVEAKSLGVKIILDFVPNHSSDENVWFEKSVNREDGYDDFYVWDDGKLNEETGARDPPSNWVSVFSGPMWTWNEKRQQYFLHQFQVKQPDLNFTNPMVREHMLDVLKFWLDRGVDGFRIDAVPHIYEHRNADGSYPDEPVSGWGSDPNAYDYHDHIYTKDQPATVDLMYEWREFLDNYRAQNGGDSRVLLAEAYSSVETLSAYFGNSTHQGTQLPMNFQLMYLSGYSTAKDVVGSIDYWMNTMWKEHQTANWVVGNHDTNRVADRMGAHKVDLLNVIVNALPGASVTYYGEEIGMSNVDVECTGDSCEDRDGERTPMQWTAGKNADFSDGESTWLPLSPEYQRYNVQTERGVSRSSLNIFKGLQELKSSSAFLAFKEDGGFSYEAVTEQVLQIIRTNKISEEYRILVNMGNGMEILDGLAPKTYEYVLATAYSTHYSGQKADLSQRIILMPYEAVVLRWLA</sequence>
<dbReference type="EC" id="3.2.1.20"/>
<dbReference type="EMBL" id="V00204">
    <property type="protein sequence ID" value="CAA23492.1"/>
    <property type="status" value="ALT_SEQ"/>
    <property type="molecule type" value="Genomic_DNA"/>
</dbReference>
<dbReference type="EMBL" id="AE013599">
    <property type="protein sequence ID" value="AAF59088.1"/>
    <property type="molecule type" value="Genomic_DNA"/>
</dbReference>
<dbReference type="EMBL" id="AY071566">
    <property type="protein sequence ID" value="AAL49188.1"/>
    <property type="molecule type" value="mRNA"/>
</dbReference>
<dbReference type="PIR" id="S08597">
    <property type="entry name" value="S08597"/>
</dbReference>
<dbReference type="RefSeq" id="NP_476625.2">
    <property type="nucleotide sequence ID" value="NM_057277.3"/>
</dbReference>
<dbReference type="SMR" id="P07191"/>
<dbReference type="BioGRID" id="61677">
    <property type="interactions" value="5"/>
</dbReference>
<dbReference type="FunCoup" id="P07191">
    <property type="interactions" value="103"/>
</dbReference>
<dbReference type="IntAct" id="P07191">
    <property type="interactions" value="3"/>
</dbReference>
<dbReference type="STRING" id="7227.FBpp0087826"/>
<dbReference type="CAZy" id="GH13">
    <property type="family name" value="Glycoside Hydrolase Family 13"/>
</dbReference>
<dbReference type="GlyCosmos" id="P07191">
    <property type="glycosylation" value="4 sites, No reported glycans"/>
</dbReference>
<dbReference type="GlyGen" id="P07191">
    <property type="glycosylation" value="4 sites"/>
</dbReference>
<dbReference type="PaxDb" id="7227-FBpp0087826"/>
<dbReference type="DNASU" id="35825"/>
<dbReference type="EnsemblMetazoa" id="FBtr0088747">
    <property type="protein sequence ID" value="FBpp0087826"/>
    <property type="gene ID" value="FBgn0002569"/>
</dbReference>
<dbReference type="GeneID" id="35825"/>
<dbReference type="KEGG" id="dme:Dmel_CG8694"/>
<dbReference type="AGR" id="FB:FBgn0002569"/>
<dbReference type="CTD" id="35825"/>
<dbReference type="FlyBase" id="FBgn0002569">
    <property type="gene designation" value="Mal-A2"/>
</dbReference>
<dbReference type="VEuPathDB" id="VectorBase:FBgn0002569"/>
<dbReference type="eggNOG" id="KOG0471">
    <property type="taxonomic scope" value="Eukaryota"/>
</dbReference>
<dbReference type="GeneTree" id="ENSGT00940000166852"/>
<dbReference type="HOGENOM" id="CLU_006462_8_3_1"/>
<dbReference type="InParanoid" id="P07191"/>
<dbReference type="OMA" id="LMYEWRD"/>
<dbReference type="OrthoDB" id="1740265at2759"/>
<dbReference type="PhylomeDB" id="P07191"/>
<dbReference type="Reactome" id="R-DME-352230">
    <property type="pathway name" value="Amino acid transport across the plasma membrane"/>
</dbReference>
<dbReference type="SignaLink" id="P07191"/>
<dbReference type="BioGRID-ORCS" id="35825">
    <property type="hits" value="0 hits in 1 CRISPR screen"/>
</dbReference>
<dbReference type="GenomeRNAi" id="35825"/>
<dbReference type="PRO" id="PR:P07191"/>
<dbReference type="Proteomes" id="UP000000803">
    <property type="component" value="Chromosome 2R"/>
</dbReference>
<dbReference type="Bgee" id="FBgn0002569">
    <property type="expression patterns" value="Expressed in adult posterior midgut class I enteroendocrine cell in adult midgut (Drosophila) and 25 other cell types or tissues"/>
</dbReference>
<dbReference type="GO" id="GO:0004558">
    <property type="term" value="F:alpha-1,4-glucosidase activity"/>
    <property type="evidence" value="ECO:0000250"/>
    <property type="project" value="FlyBase"/>
</dbReference>
<dbReference type="GO" id="GO:0005975">
    <property type="term" value="P:carbohydrate metabolic process"/>
    <property type="evidence" value="ECO:0007669"/>
    <property type="project" value="InterPro"/>
</dbReference>
<dbReference type="CDD" id="cd11328">
    <property type="entry name" value="AmyAc_maltase"/>
    <property type="match status" value="1"/>
</dbReference>
<dbReference type="FunFam" id="3.90.400.10:FF:000001">
    <property type="entry name" value="Maltase A3, isoform A"/>
    <property type="match status" value="1"/>
</dbReference>
<dbReference type="Gene3D" id="3.20.20.80">
    <property type="entry name" value="Glycosidases"/>
    <property type="match status" value="1"/>
</dbReference>
<dbReference type="Gene3D" id="3.90.400.10">
    <property type="entry name" value="Oligo-1,6-glucosidase, Domain 2"/>
    <property type="match status" value="1"/>
</dbReference>
<dbReference type="InterPro" id="IPR006047">
    <property type="entry name" value="Glyco_hydro_13_cat_dom"/>
</dbReference>
<dbReference type="InterPro" id="IPR017853">
    <property type="entry name" value="Glycoside_hydrolase_SF"/>
</dbReference>
<dbReference type="InterPro" id="IPR045857">
    <property type="entry name" value="O16G_dom_2"/>
</dbReference>
<dbReference type="PANTHER" id="PTHR10357">
    <property type="entry name" value="ALPHA-AMYLASE FAMILY MEMBER"/>
    <property type="match status" value="1"/>
</dbReference>
<dbReference type="PANTHER" id="PTHR10357:SF234">
    <property type="entry name" value="MALTASE A2-RELATED"/>
    <property type="match status" value="1"/>
</dbReference>
<dbReference type="Pfam" id="PF00128">
    <property type="entry name" value="Alpha-amylase"/>
    <property type="match status" value="1"/>
</dbReference>
<dbReference type="SMART" id="SM00642">
    <property type="entry name" value="Aamy"/>
    <property type="match status" value="1"/>
</dbReference>
<dbReference type="SUPFAM" id="SSF51445">
    <property type="entry name" value="(Trans)glycosidases"/>
    <property type="match status" value="1"/>
</dbReference>
<evidence type="ECO:0000250" key="1"/>
<evidence type="ECO:0000255" key="2"/>
<evidence type="ECO:0000269" key="3">
    <source>
    </source>
</evidence>
<evidence type="ECO:0000305" key="4"/>